<accession>A1T8K2</accession>
<reference key="1">
    <citation type="submission" date="2006-12" db="EMBL/GenBank/DDBJ databases">
        <title>Complete sequence of Mycobacterium vanbaalenii PYR-1.</title>
        <authorList>
            <consortium name="US DOE Joint Genome Institute"/>
            <person name="Copeland A."/>
            <person name="Lucas S."/>
            <person name="Lapidus A."/>
            <person name="Barry K."/>
            <person name="Detter J.C."/>
            <person name="Glavina del Rio T."/>
            <person name="Hammon N."/>
            <person name="Israni S."/>
            <person name="Dalin E."/>
            <person name="Tice H."/>
            <person name="Pitluck S."/>
            <person name="Singan V."/>
            <person name="Schmutz J."/>
            <person name="Larimer F."/>
            <person name="Land M."/>
            <person name="Hauser L."/>
            <person name="Kyrpides N."/>
            <person name="Anderson I.J."/>
            <person name="Miller C."/>
            <person name="Richardson P."/>
        </authorList>
    </citation>
    <scope>NUCLEOTIDE SEQUENCE [LARGE SCALE GENOMIC DNA]</scope>
    <source>
        <strain>DSM 7251 / JCM 13017 / BCRC 16820 / KCTC 9966 / NRRL B-24157 / PYR-1</strain>
    </source>
</reference>
<protein>
    <recommendedName>
        <fullName evidence="1">6,7-dimethyl-8-ribityllumazine synthase</fullName>
        <shortName evidence="1">DMRL synthase</shortName>
        <shortName evidence="1">LS</shortName>
        <shortName evidence="1">Lumazine synthase</shortName>
        <ecNumber evidence="1">2.5.1.78</ecNumber>
    </recommendedName>
</protein>
<comment type="function">
    <text evidence="1">Catalyzes the formation of 6,7-dimethyl-8-ribityllumazine by condensation of 5-amino-6-(D-ribitylamino)uracil with 3,4-dihydroxy-2-butanone 4-phosphate. This is the penultimate step in the biosynthesis of riboflavin.</text>
</comment>
<comment type="catalytic activity">
    <reaction evidence="1">
        <text>(2S)-2-hydroxy-3-oxobutyl phosphate + 5-amino-6-(D-ribitylamino)uracil = 6,7-dimethyl-8-(1-D-ribityl)lumazine + phosphate + 2 H2O + H(+)</text>
        <dbReference type="Rhea" id="RHEA:26152"/>
        <dbReference type="ChEBI" id="CHEBI:15377"/>
        <dbReference type="ChEBI" id="CHEBI:15378"/>
        <dbReference type="ChEBI" id="CHEBI:15934"/>
        <dbReference type="ChEBI" id="CHEBI:43474"/>
        <dbReference type="ChEBI" id="CHEBI:58201"/>
        <dbReference type="ChEBI" id="CHEBI:58830"/>
        <dbReference type="EC" id="2.5.1.78"/>
    </reaction>
</comment>
<comment type="pathway">
    <text evidence="1">Cofactor biosynthesis; riboflavin biosynthesis; riboflavin from 2-hydroxy-3-oxobutyl phosphate and 5-amino-6-(D-ribitylamino)uracil: step 1/2.</text>
</comment>
<comment type="subunit">
    <text evidence="1">Homopentamer.</text>
</comment>
<comment type="similarity">
    <text evidence="1">Belongs to the DMRL synthase family.</text>
</comment>
<feature type="chain" id="PRO_1000040459" description="6,7-dimethyl-8-ribityllumazine synthase">
    <location>
        <begin position="1"/>
        <end position="157"/>
    </location>
</feature>
<feature type="active site" description="Proton donor" evidence="1">
    <location>
        <position position="89"/>
    </location>
</feature>
<feature type="binding site" evidence="1">
    <location>
        <position position="27"/>
    </location>
    <ligand>
        <name>5-amino-6-(D-ribitylamino)uracil</name>
        <dbReference type="ChEBI" id="CHEBI:15934"/>
    </ligand>
</feature>
<feature type="binding site" evidence="1">
    <location>
        <begin position="59"/>
        <end position="61"/>
    </location>
    <ligand>
        <name>5-amino-6-(D-ribitylamino)uracil</name>
        <dbReference type="ChEBI" id="CHEBI:15934"/>
    </ligand>
</feature>
<feature type="binding site" evidence="1">
    <location>
        <begin position="81"/>
        <end position="83"/>
    </location>
    <ligand>
        <name>5-amino-6-(D-ribitylamino)uracil</name>
        <dbReference type="ChEBI" id="CHEBI:15934"/>
    </ligand>
</feature>
<feature type="binding site" evidence="1">
    <location>
        <begin position="86"/>
        <end position="87"/>
    </location>
    <ligand>
        <name>(2S)-2-hydroxy-3-oxobutyl phosphate</name>
        <dbReference type="ChEBI" id="CHEBI:58830"/>
    </ligand>
</feature>
<feature type="binding site" evidence="1">
    <location>
        <position position="114"/>
    </location>
    <ligand>
        <name>5-amino-6-(D-ribitylamino)uracil</name>
        <dbReference type="ChEBI" id="CHEBI:15934"/>
    </ligand>
</feature>
<feature type="binding site" evidence="1">
    <location>
        <position position="128"/>
    </location>
    <ligand>
        <name>(2S)-2-hydroxy-3-oxobutyl phosphate</name>
        <dbReference type="ChEBI" id="CHEBI:58830"/>
    </ligand>
</feature>
<organism>
    <name type="scientific">Mycolicibacterium vanbaalenii (strain DSM 7251 / JCM 13017 / BCRC 16820 / KCTC 9966 / NRRL B-24157 / PYR-1)</name>
    <name type="common">Mycobacterium vanbaalenii</name>
    <dbReference type="NCBI Taxonomy" id="350058"/>
    <lineage>
        <taxon>Bacteria</taxon>
        <taxon>Bacillati</taxon>
        <taxon>Actinomycetota</taxon>
        <taxon>Actinomycetes</taxon>
        <taxon>Mycobacteriales</taxon>
        <taxon>Mycobacteriaceae</taxon>
        <taxon>Mycolicibacterium</taxon>
    </lineage>
</organism>
<keyword id="KW-0686">Riboflavin biosynthesis</keyword>
<keyword id="KW-0808">Transferase</keyword>
<evidence type="ECO:0000255" key="1">
    <source>
        <dbReference type="HAMAP-Rule" id="MF_00178"/>
    </source>
</evidence>
<proteinExistence type="inferred from homology"/>
<name>RISB_MYCVP</name>
<dbReference type="EC" id="2.5.1.78" evidence="1"/>
<dbReference type="EMBL" id="CP000511">
    <property type="protein sequence ID" value="ABM13502.1"/>
    <property type="molecule type" value="Genomic_DNA"/>
</dbReference>
<dbReference type="RefSeq" id="WP_011779910.1">
    <property type="nucleotide sequence ID" value="NC_008726.1"/>
</dbReference>
<dbReference type="SMR" id="A1T8K2"/>
<dbReference type="STRING" id="350058.Mvan_2695"/>
<dbReference type="KEGG" id="mva:Mvan_2695"/>
<dbReference type="eggNOG" id="COG0054">
    <property type="taxonomic scope" value="Bacteria"/>
</dbReference>
<dbReference type="HOGENOM" id="CLU_089358_1_2_11"/>
<dbReference type="UniPathway" id="UPA00275">
    <property type="reaction ID" value="UER00404"/>
</dbReference>
<dbReference type="Proteomes" id="UP000009159">
    <property type="component" value="Chromosome"/>
</dbReference>
<dbReference type="GO" id="GO:0005829">
    <property type="term" value="C:cytosol"/>
    <property type="evidence" value="ECO:0007669"/>
    <property type="project" value="TreeGrafter"/>
</dbReference>
<dbReference type="GO" id="GO:0009349">
    <property type="term" value="C:riboflavin synthase complex"/>
    <property type="evidence" value="ECO:0007669"/>
    <property type="project" value="InterPro"/>
</dbReference>
<dbReference type="GO" id="GO:0000906">
    <property type="term" value="F:6,7-dimethyl-8-ribityllumazine synthase activity"/>
    <property type="evidence" value="ECO:0007669"/>
    <property type="project" value="UniProtKB-UniRule"/>
</dbReference>
<dbReference type="GO" id="GO:0009231">
    <property type="term" value="P:riboflavin biosynthetic process"/>
    <property type="evidence" value="ECO:0007669"/>
    <property type="project" value="UniProtKB-UniRule"/>
</dbReference>
<dbReference type="CDD" id="cd09209">
    <property type="entry name" value="Lumazine_synthase-I"/>
    <property type="match status" value="1"/>
</dbReference>
<dbReference type="Gene3D" id="3.40.50.960">
    <property type="entry name" value="Lumazine/riboflavin synthase"/>
    <property type="match status" value="1"/>
</dbReference>
<dbReference type="HAMAP" id="MF_00178">
    <property type="entry name" value="Lumazine_synth"/>
    <property type="match status" value="1"/>
</dbReference>
<dbReference type="InterPro" id="IPR034964">
    <property type="entry name" value="LS"/>
</dbReference>
<dbReference type="InterPro" id="IPR002180">
    <property type="entry name" value="LS/RS"/>
</dbReference>
<dbReference type="InterPro" id="IPR036467">
    <property type="entry name" value="LS/RS_sf"/>
</dbReference>
<dbReference type="NCBIfam" id="TIGR00114">
    <property type="entry name" value="lumazine-synth"/>
    <property type="match status" value="1"/>
</dbReference>
<dbReference type="PANTHER" id="PTHR21058:SF0">
    <property type="entry name" value="6,7-DIMETHYL-8-RIBITYLLUMAZINE SYNTHASE"/>
    <property type="match status" value="1"/>
</dbReference>
<dbReference type="PANTHER" id="PTHR21058">
    <property type="entry name" value="6,7-DIMETHYL-8-RIBITYLLUMAZINE SYNTHASE DMRL SYNTHASE LUMAZINE SYNTHASE"/>
    <property type="match status" value="1"/>
</dbReference>
<dbReference type="Pfam" id="PF00885">
    <property type="entry name" value="DMRL_synthase"/>
    <property type="match status" value="1"/>
</dbReference>
<dbReference type="SUPFAM" id="SSF52121">
    <property type="entry name" value="Lumazine synthase"/>
    <property type="match status" value="1"/>
</dbReference>
<sequence>MSPAAGVPELPALDGKGLRLAIVASTWHETICDALLDGARKVAVGAGIDDPTVVRVLGAIEIPVVAQALARTHDAVVALGVVIRGETPHFDYVCDAVTQGLTRVSLDASTPVANGVLTTNTEHQALDRAGLPDSAEDKGAQAAAAALSTALTLRQLS</sequence>
<gene>
    <name evidence="1" type="primary">ribH</name>
    <name type="ordered locus">Mvan_2695</name>
</gene>